<gene>
    <name type="ordered locus">MIMI_L434</name>
</gene>
<reference key="1">
    <citation type="journal article" date="2004" name="Science">
        <title>The 1.2-megabase genome sequence of Mimivirus.</title>
        <authorList>
            <person name="Raoult D."/>
            <person name="Audic S."/>
            <person name="Robert C."/>
            <person name="Abergel C."/>
            <person name="Renesto P."/>
            <person name="Ogata H."/>
            <person name="La Scola B."/>
            <person name="Susan M."/>
            <person name="Claverie J.-M."/>
        </authorList>
    </citation>
    <scope>NUCLEOTIDE SEQUENCE [LARGE SCALE GENOMIC DNA]</scope>
    <source>
        <strain>Rowbotham-Bradford</strain>
    </source>
</reference>
<feature type="chain" id="PRO_0000071282" description="Uncharacterized protein L434">
    <location>
        <begin position="1"/>
        <end position="159"/>
    </location>
</feature>
<feature type="transmembrane region" description="Helical" evidence="1">
    <location>
        <begin position="76"/>
        <end position="96"/>
    </location>
</feature>
<feature type="transmembrane region" description="Helical" evidence="1">
    <location>
        <begin position="104"/>
        <end position="124"/>
    </location>
</feature>
<feature type="transmembrane region" description="Helical" evidence="1">
    <location>
        <begin position="131"/>
        <end position="151"/>
    </location>
</feature>
<organismHost>
    <name type="scientific">Acanthamoeba polyphaga</name>
    <name type="common">Amoeba</name>
    <dbReference type="NCBI Taxonomy" id="5757"/>
</organismHost>
<dbReference type="EMBL" id="AY653733">
    <property type="protein sequence ID" value="AAV50703.1"/>
    <property type="molecule type" value="Genomic_DNA"/>
</dbReference>
<dbReference type="KEGG" id="vg:9925055"/>
<dbReference type="OrthoDB" id="27307at10239"/>
<dbReference type="Proteomes" id="UP000001134">
    <property type="component" value="Genome"/>
</dbReference>
<dbReference type="GO" id="GO:0016020">
    <property type="term" value="C:membrane"/>
    <property type="evidence" value="ECO:0007669"/>
    <property type="project" value="UniProtKB-SubCell"/>
</dbReference>
<proteinExistence type="predicted"/>
<evidence type="ECO:0000255" key="1"/>
<evidence type="ECO:0000305" key="2"/>
<name>YL434_MIMIV</name>
<accession>Q5UQN2</accession>
<protein>
    <recommendedName>
        <fullName>Uncharacterized protein L434</fullName>
    </recommendedName>
</protein>
<organism>
    <name type="scientific">Acanthamoeba polyphaga mimivirus</name>
    <name type="common">APMV</name>
    <dbReference type="NCBI Taxonomy" id="212035"/>
    <lineage>
        <taxon>Viruses</taxon>
        <taxon>Varidnaviria</taxon>
        <taxon>Bamfordvirae</taxon>
        <taxon>Nucleocytoviricota</taxon>
        <taxon>Megaviricetes</taxon>
        <taxon>Imitervirales</taxon>
        <taxon>Mimiviridae</taxon>
        <taxon>Megamimivirinae</taxon>
        <taxon>Mimivirus</taxon>
        <taxon>Mimivirus bradfordmassiliense</taxon>
    </lineage>
</organism>
<sequence>MGDYYVSDAPSTVNLADQINQHLSPVQSVQPVQPIQTQYNPNVLTSQQLAQIQNNPMYHYNDSRFTFDFQEILKRAIKYLIEGLAVAFVAYYFIGKGKLNIKDIVMLGITAACVFAILDVFSPTVALGARFGAGFGIGTSLFGLNPAVIGGPSLVAPIL</sequence>
<comment type="subcellular location">
    <subcellularLocation>
        <location evidence="2">Membrane</location>
        <topology evidence="2">Multi-pass membrane protein</topology>
    </subcellularLocation>
</comment>
<keyword id="KW-0472">Membrane</keyword>
<keyword id="KW-1185">Reference proteome</keyword>
<keyword id="KW-0812">Transmembrane</keyword>
<keyword id="KW-1133">Transmembrane helix</keyword>